<protein>
    <recommendedName>
        <fullName>Pyruvate dehydrogenase E1 component subunit beta, mitochondrial</fullName>
        <shortName>PDHE1-B</shortName>
        <ecNumber>1.2.4.1</ecNumber>
    </recommendedName>
</protein>
<comment type="function">
    <text evidence="5 6">The pyruvate dehydrogenase complex catalyzes the overall conversion of pyruvate to acetyl-CoA and CO(2), and thereby links the glycolytic pathway to the tricarboxylic cycle.</text>
</comment>
<comment type="catalytic activity">
    <reaction evidence="6">
        <text>N(6)-[(R)-lipoyl]-L-lysyl-[protein] + pyruvate + H(+) = N(6)-[(R)-S(8)-acetyldihydrolipoyl]-L-lysyl-[protein] + CO2</text>
        <dbReference type="Rhea" id="RHEA:19189"/>
        <dbReference type="Rhea" id="RHEA-COMP:10474"/>
        <dbReference type="Rhea" id="RHEA-COMP:10478"/>
        <dbReference type="ChEBI" id="CHEBI:15361"/>
        <dbReference type="ChEBI" id="CHEBI:15378"/>
        <dbReference type="ChEBI" id="CHEBI:16526"/>
        <dbReference type="ChEBI" id="CHEBI:83099"/>
        <dbReference type="ChEBI" id="CHEBI:83111"/>
        <dbReference type="EC" id="1.2.4.1"/>
    </reaction>
</comment>
<comment type="cofactor">
    <cofactor evidence="2 6">
        <name>thiamine diphosphate</name>
        <dbReference type="ChEBI" id="CHEBI:58937"/>
    </cofactor>
</comment>
<comment type="subunit">
    <text evidence="2 3 5 6 7 10">Heterotetramer of two PDHA1 and two PDHB subunits (PubMed:12651851, PubMed:17474719, PubMed:19081061, PubMed:29970614). The heterotetramer interacts with DLAT, and is part of the multimeric pyruvate dehydrogenase complex that contains multiple copies of pyruvate dehydrogenase (E1), dihydrolipoamide acetyltransferase (DLAT, E2) and lipoamide dehydrogenase (DLD, E3) (PubMed:14638692). These subunits are bound to an inner core composed of about 48 DLAT and 12 PDHX molecules (PubMed:14638692). Interacts with DLAT (PubMed:20160912).</text>
</comment>
<comment type="interaction">
    <interactant intactId="EBI-1035872">
        <id>P11177</id>
    </interactant>
    <interactant intactId="EBI-2959723">
        <id>P10515</id>
        <label>DLAT</label>
    </interactant>
    <organismsDiffer>false</organismsDiffer>
    <experiments>8</experiments>
</comment>
<comment type="interaction">
    <interactant intactId="EBI-1035872">
        <id>P11177</id>
    </interactant>
    <interactant intactId="EBI-715747">
        <id>P08559</id>
        <label>PDHA1</label>
    </interactant>
    <organismsDiffer>false</organismsDiffer>
    <experiments>5</experiments>
</comment>
<comment type="interaction">
    <interactant intactId="EBI-25766519">
        <id>P11177-1</id>
    </interactant>
    <interactant intactId="EBI-25766512">
        <id>P08559-1</id>
        <label>PDHA1</label>
    </interactant>
    <organismsDiffer>false</organismsDiffer>
    <experiments>4</experiments>
</comment>
<comment type="subcellular location">
    <subcellularLocation>
        <location>Mitochondrion matrix</location>
    </subcellularLocation>
</comment>
<comment type="alternative products">
    <event type="alternative splicing"/>
    <isoform>
        <id>P11177-1</id>
        <name>1</name>
        <sequence type="displayed"/>
    </isoform>
    <isoform>
        <id>P11177-2</id>
        <name>2</name>
        <sequence type="described" ref="VSP_012675"/>
    </isoform>
    <isoform>
        <id>P11177-3</id>
        <name>3</name>
        <sequence type="described" ref="VSP_043364"/>
    </isoform>
</comment>
<comment type="disease" evidence="4">
    <disease id="DI-03205">
        <name>Pyruvate dehydrogenase E1-beta deficiency</name>
        <acronym>PDHBD</acronym>
        <description>An enzymatic defect causing primary lactic acidosis in children. It is associated with a broad clinical spectrum ranging from fatal lactic acidosis in the newborn to chronic neurologic dysfunction with structural abnormalities in the central nervous system without systemic acidosis.</description>
        <dbReference type="MIM" id="614111"/>
    </disease>
    <text>The disease is caused by variants affecting the gene represented in this entry.</text>
</comment>
<proteinExistence type="evidence at protein level"/>
<dbReference type="EC" id="1.2.4.1"/>
<dbReference type="EMBL" id="M34479">
    <property type="protein sequence ID" value="AAA36428.1"/>
    <property type="molecule type" value="mRNA"/>
</dbReference>
<dbReference type="EMBL" id="M19123">
    <property type="protein sequence ID" value="AAA60052.1"/>
    <property type="status" value="ALT_SEQ"/>
    <property type="molecule type" value="mRNA"/>
</dbReference>
<dbReference type="EMBL" id="M54788">
    <property type="protein sequence ID" value="AAA60053.1"/>
    <property type="molecule type" value="mRNA"/>
</dbReference>
<dbReference type="EMBL" id="M34055">
    <property type="protein sequence ID" value="AAA60233.1"/>
    <property type="molecule type" value="mRNA"/>
</dbReference>
<dbReference type="EMBL" id="M34056">
    <property type="protein sequence ID" value="AAA60054.1"/>
    <property type="molecule type" value="mRNA"/>
</dbReference>
<dbReference type="EMBL" id="D90086">
    <property type="protein sequence ID" value="BAA14123.1"/>
    <property type="molecule type" value="Genomic_DNA"/>
</dbReference>
<dbReference type="EMBL" id="J03576">
    <property type="protein sequence ID" value="AAA88097.1"/>
    <property type="molecule type" value="mRNA"/>
</dbReference>
<dbReference type="EMBL" id="AL117618">
    <property type="protein sequence ID" value="CAB56017.1"/>
    <property type="molecule type" value="mRNA"/>
</dbReference>
<dbReference type="EMBL" id="CR541911">
    <property type="protein sequence ID" value="CAG46709.1"/>
    <property type="molecule type" value="mRNA"/>
</dbReference>
<dbReference type="EMBL" id="AK293153">
    <property type="protein sequence ID" value="BAG56698.1"/>
    <property type="molecule type" value="mRNA"/>
</dbReference>
<dbReference type="EMBL" id="AK313022">
    <property type="protein sequence ID" value="BAG35857.1"/>
    <property type="molecule type" value="mRNA"/>
</dbReference>
<dbReference type="EMBL" id="AC135507">
    <property type="status" value="NOT_ANNOTATED_CDS"/>
    <property type="molecule type" value="Genomic_DNA"/>
</dbReference>
<dbReference type="EMBL" id="CH471055">
    <property type="protein sequence ID" value="EAW65371.1"/>
    <property type="molecule type" value="Genomic_DNA"/>
</dbReference>
<dbReference type="EMBL" id="BC000439">
    <property type="protein sequence ID" value="AAH00439.1"/>
    <property type="molecule type" value="mRNA"/>
</dbReference>
<dbReference type="EMBL" id="BC001924">
    <property type="protein sequence ID" value="AAH01924.1"/>
    <property type="molecule type" value="mRNA"/>
</dbReference>
<dbReference type="EMBL" id="X57778">
    <property type="protein sequence ID" value="CAA40924.1"/>
    <property type="molecule type" value="mRNA"/>
</dbReference>
<dbReference type="CCDS" id="CCDS2890.1">
    <molecule id="P11177-1"/>
</dbReference>
<dbReference type="CCDS" id="CCDS54602.1">
    <molecule id="P11177-3"/>
</dbReference>
<dbReference type="CCDS" id="CCDS82795.1">
    <molecule id="P11177-2"/>
</dbReference>
<dbReference type="PIR" id="JU0145">
    <property type="entry name" value="DEHUPB"/>
</dbReference>
<dbReference type="RefSeq" id="NP_000916.2">
    <molecule id="P11177-1"/>
    <property type="nucleotide sequence ID" value="NM_000925.4"/>
</dbReference>
<dbReference type="RefSeq" id="NP_001166939.1">
    <molecule id="P11177-3"/>
    <property type="nucleotide sequence ID" value="NM_001173468.2"/>
</dbReference>
<dbReference type="RefSeq" id="NP_001302465.1">
    <molecule id="P11177-2"/>
    <property type="nucleotide sequence ID" value="NM_001315536.2"/>
</dbReference>
<dbReference type="PDB" id="1NI4">
    <property type="method" value="X-ray"/>
    <property type="resolution" value="1.95 A"/>
    <property type="chains" value="B/D=31-359"/>
</dbReference>
<dbReference type="PDB" id="2OZL">
    <property type="method" value="X-ray"/>
    <property type="resolution" value="1.90 A"/>
    <property type="chains" value="B/D=32-359"/>
</dbReference>
<dbReference type="PDB" id="3EXE">
    <property type="method" value="X-ray"/>
    <property type="resolution" value="1.98 A"/>
    <property type="chains" value="B/D/F/H=31-359"/>
</dbReference>
<dbReference type="PDB" id="3EXF">
    <property type="method" value="X-ray"/>
    <property type="resolution" value="3.00 A"/>
    <property type="chains" value="B/D/F/H=31-359"/>
</dbReference>
<dbReference type="PDB" id="3EXG">
    <property type="method" value="X-ray"/>
    <property type="resolution" value="3.01 A"/>
    <property type="chains" value="2/4/6/B/D/F/H/J/L/N/P/R/T/V/X/Z=31-359"/>
</dbReference>
<dbReference type="PDB" id="3EXH">
    <property type="method" value="X-ray"/>
    <property type="resolution" value="2.44 A"/>
    <property type="chains" value="B/D/F/H=31-359"/>
</dbReference>
<dbReference type="PDB" id="3EXI">
    <property type="method" value="X-ray"/>
    <property type="resolution" value="2.20 A"/>
    <property type="chains" value="B=31-359"/>
</dbReference>
<dbReference type="PDB" id="6CER">
    <property type="method" value="X-ray"/>
    <property type="resolution" value="2.69 A"/>
    <property type="chains" value="B/D/F/H=31-359"/>
</dbReference>
<dbReference type="PDB" id="6CFO">
    <property type="method" value="X-ray"/>
    <property type="resolution" value="2.70 A"/>
    <property type="chains" value="B/D=31-359"/>
</dbReference>
<dbReference type="PDBsum" id="1NI4"/>
<dbReference type="PDBsum" id="2OZL"/>
<dbReference type="PDBsum" id="3EXE"/>
<dbReference type="PDBsum" id="3EXF"/>
<dbReference type="PDBsum" id="3EXG"/>
<dbReference type="PDBsum" id="3EXH"/>
<dbReference type="PDBsum" id="3EXI"/>
<dbReference type="PDBsum" id="6CER"/>
<dbReference type="PDBsum" id="6CFO"/>
<dbReference type="SMR" id="P11177"/>
<dbReference type="BioGRID" id="111188">
    <property type="interactions" value="334"/>
</dbReference>
<dbReference type="ComplexPortal" id="CPX-376">
    <property type="entry name" value="Pyruvate dehydrogenase E1 heterotetramer"/>
</dbReference>
<dbReference type="ComplexPortal" id="CPX-6233">
    <property type="entry name" value="Mitochondrial pyruvate dehydrogenase complex, somatic variant"/>
</dbReference>
<dbReference type="ComplexPortal" id="CPX-6242">
    <property type="entry name" value="Mitochondrial pyruvate dehydrogenase complex, testis-specific variant"/>
</dbReference>
<dbReference type="DIP" id="DIP-37651N"/>
<dbReference type="FunCoup" id="P11177">
    <property type="interactions" value="2009"/>
</dbReference>
<dbReference type="IntAct" id="P11177">
    <property type="interactions" value="88"/>
</dbReference>
<dbReference type="MINT" id="P11177"/>
<dbReference type="STRING" id="9606.ENSP00000307241"/>
<dbReference type="ChEMBL" id="CHEMBL4882"/>
<dbReference type="DrugBank" id="DB00157">
    <property type="generic name" value="NADH"/>
</dbReference>
<dbReference type="DrugBank" id="DB00119">
    <property type="generic name" value="Pyruvic acid"/>
</dbReference>
<dbReference type="GlyCosmos" id="P11177">
    <property type="glycosylation" value="2 sites, 1 glycan"/>
</dbReference>
<dbReference type="GlyGen" id="P11177">
    <property type="glycosylation" value="2 sites, 1 O-linked glycan (2 sites)"/>
</dbReference>
<dbReference type="iPTMnet" id="P11177"/>
<dbReference type="MetOSite" id="P11177"/>
<dbReference type="PhosphoSitePlus" id="P11177"/>
<dbReference type="SwissPalm" id="P11177"/>
<dbReference type="BioMuta" id="PDHB"/>
<dbReference type="DMDM" id="134044259"/>
<dbReference type="REPRODUCTION-2DPAGE" id="IPI00549885"/>
<dbReference type="CPTAC" id="CPTAC-2759"/>
<dbReference type="jPOST" id="P11177"/>
<dbReference type="MassIVE" id="P11177"/>
<dbReference type="PaxDb" id="9606-ENSP00000307241"/>
<dbReference type="PeptideAtlas" id="P11177"/>
<dbReference type="ProteomicsDB" id="52715">
    <molecule id="P11177-1"/>
</dbReference>
<dbReference type="ProteomicsDB" id="52716">
    <molecule id="P11177-2"/>
</dbReference>
<dbReference type="ProteomicsDB" id="52717">
    <molecule id="P11177-3"/>
</dbReference>
<dbReference type="Pumba" id="P11177"/>
<dbReference type="TopDownProteomics" id="P11177-1">
    <molecule id="P11177-1"/>
</dbReference>
<dbReference type="Antibodypedia" id="31652">
    <property type="antibodies" value="241 antibodies from 34 providers"/>
</dbReference>
<dbReference type="DNASU" id="5162"/>
<dbReference type="Ensembl" id="ENST00000302746.11">
    <molecule id="P11177-1"/>
    <property type="protein sequence ID" value="ENSP00000307241.6"/>
    <property type="gene ID" value="ENSG00000168291.13"/>
</dbReference>
<dbReference type="Ensembl" id="ENST00000383714.8">
    <molecule id="P11177-2"/>
    <property type="protein sequence ID" value="ENSP00000373220.4"/>
    <property type="gene ID" value="ENSG00000168291.13"/>
</dbReference>
<dbReference type="Ensembl" id="ENST00000485460.5">
    <molecule id="P11177-3"/>
    <property type="protein sequence ID" value="ENSP00000417267.1"/>
    <property type="gene ID" value="ENSG00000168291.13"/>
</dbReference>
<dbReference type="GeneID" id="5162"/>
<dbReference type="KEGG" id="hsa:5162"/>
<dbReference type="MANE-Select" id="ENST00000302746.11">
    <property type="protein sequence ID" value="ENSP00000307241.6"/>
    <property type="RefSeq nucleotide sequence ID" value="NM_000925.4"/>
    <property type="RefSeq protein sequence ID" value="NP_000916.2"/>
</dbReference>
<dbReference type="UCSC" id="uc003dkf.4">
    <molecule id="P11177-1"/>
    <property type="organism name" value="human"/>
</dbReference>
<dbReference type="AGR" id="HGNC:8808"/>
<dbReference type="CTD" id="5162"/>
<dbReference type="DisGeNET" id="5162"/>
<dbReference type="GeneCards" id="PDHB"/>
<dbReference type="GeneReviews" id="PDHB"/>
<dbReference type="HGNC" id="HGNC:8808">
    <property type="gene designation" value="PDHB"/>
</dbReference>
<dbReference type="HPA" id="ENSG00000168291">
    <property type="expression patterns" value="Tissue enhanced (tongue)"/>
</dbReference>
<dbReference type="MalaCards" id="PDHB"/>
<dbReference type="MIM" id="179060">
    <property type="type" value="gene"/>
</dbReference>
<dbReference type="MIM" id="614111">
    <property type="type" value="phenotype"/>
</dbReference>
<dbReference type="neXtProt" id="NX_P11177"/>
<dbReference type="OpenTargets" id="ENSG00000168291"/>
<dbReference type="Orphanet" id="255138">
    <property type="disease" value="Pyruvate dehydrogenase E1-beta deficiency"/>
</dbReference>
<dbReference type="PharmGKB" id="PA33152"/>
<dbReference type="VEuPathDB" id="HostDB:ENSG00000168291"/>
<dbReference type="eggNOG" id="KOG0524">
    <property type="taxonomic scope" value="Eukaryota"/>
</dbReference>
<dbReference type="GeneTree" id="ENSGT00940000155146"/>
<dbReference type="HOGENOM" id="CLU_012907_1_1_1"/>
<dbReference type="InParanoid" id="P11177"/>
<dbReference type="OMA" id="WYANCPG"/>
<dbReference type="OrthoDB" id="10266385at2759"/>
<dbReference type="PAN-GO" id="P11177">
    <property type="GO annotations" value="3 GO annotations based on evolutionary models"/>
</dbReference>
<dbReference type="PhylomeDB" id="P11177"/>
<dbReference type="TreeFam" id="TF105674"/>
<dbReference type="BioCyc" id="MetaCyc:HS09727-MONOMER"/>
<dbReference type="BRENDA" id="1.2.1.104">
    <property type="organism ID" value="2681"/>
</dbReference>
<dbReference type="BRENDA" id="1.2.4.1">
    <property type="organism ID" value="2681"/>
</dbReference>
<dbReference type="PathwayCommons" id="P11177"/>
<dbReference type="Reactome" id="R-HSA-204174">
    <property type="pathway name" value="Regulation of pyruvate dehydrogenase (PDH) complex"/>
</dbReference>
<dbReference type="Reactome" id="R-HSA-5362517">
    <property type="pathway name" value="Signaling by Retinoic Acid"/>
</dbReference>
<dbReference type="Reactome" id="R-HSA-9837999">
    <property type="pathway name" value="Mitochondrial protein degradation"/>
</dbReference>
<dbReference type="Reactome" id="R-HSA-9861559">
    <property type="pathway name" value="PDH complex synthesizes acetyl-CoA from PYR"/>
</dbReference>
<dbReference type="SABIO-RK" id="P11177"/>
<dbReference type="SignaLink" id="P11177"/>
<dbReference type="SIGNOR" id="P11177"/>
<dbReference type="BioGRID-ORCS" id="5162">
    <property type="hits" value="40 hits in 1165 CRISPR screens"/>
</dbReference>
<dbReference type="CD-CODE" id="91857CE7">
    <property type="entry name" value="Nucleolus"/>
</dbReference>
<dbReference type="CD-CODE" id="FB4E32DD">
    <property type="entry name" value="Presynaptic clusters and postsynaptic densities"/>
</dbReference>
<dbReference type="ChiTaRS" id="PDHB">
    <property type="organism name" value="human"/>
</dbReference>
<dbReference type="EvolutionaryTrace" id="P11177"/>
<dbReference type="GeneWiki" id="Pyruvate_dehydrogenase_(lipoamide)_beta"/>
<dbReference type="GenomeRNAi" id="5162"/>
<dbReference type="Pharos" id="P11177">
    <property type="development level" value="Tbio"/>
</dbReference>
<dbReference type="PRO" id="PR:P11177"/>
<dbReference type="Proteomes" id="UP000005640">
    <property type="component" value="Chromosome 3"/>
</dbReference>
<dbReference type="RNAct" id="P11177">
    <property type="molecule type" value="protein"/>
</dbReference>
<dbReference type="Bgee" id="ENSG00000168291">
    <property type="expression patterns" value="Expressed in endothelial cell and 212 other cell types or tissues"/>
</dbReference>
<dbReference type="ExpressionAtlas" id="P11177">
    <property type="expression patterns" value="baseline and differential"/>
</dbReference>
<dbReference type="GO" id="GO:0005759">
    <property type="term" value="C:mitochondrial matrix"/>
    <property type="evidence" value="ECO:0000304"/>
    <property type="project" value="Reactome"/>
</dbReference>
<dbReference type="GO" id="GO:0005739">
    <property type="term" value="C:mitochondrion"/>
    <property type="evidence" value="ECO:0000314"/>
    <property type="project" value="HPA"/>
</dbReference>
<dbReference type="GO" id="GO:0005654">
    <property type="term" value="C:nucleoplasm"/>
    <property type="evidence" value="ECO:0000314"/>
    <property type="project" value="HPA"/>
</dbReference>
<dbReference type="GO" id="GO:0005634">
    <property type="term" value="C:nucleus"/>
    <property type="evidence" value="ECO:0007005"/>
    <property type="project" value="UniProtKB"/>
</dbReference>
<dbReference type="GO" id="GO:0045254">
    <property type="term" value="C:pyruvate dehydrogenase complex"/>
    <property type="evidence" value="ECO:0000314"/>
    <property type="project" value="UniProtKB"/>
</dbReference>
<dbReference type="GO" id="GO:0046872">
    <property type="term" value="F:metal ion binding"/>
    <property type="evidence" value="ECO:0007669"/>
    <property type="project" value="UniProtKB-KW"/>
</dbReference>
<dbReference type="GO" id="GO:0004739">
    <property type="term" value="F:pyruvate dehydrogenase (acetyl-transferring) activity"/>
    <property type="evidence" value="ECO:0000304"/>
    <property type="project" value="ProtInc"/>
</dbReference>
<dbReference type="GO" id="GO:0006006">
    <property type="term" value="P:glucose metabolic process"/>
    <property type="evidence" value="ECO:0007669"/>
    <property type="project" value="UniProtKB-KW"/>
</dbReference>
<dbReference type="GO" id="GO:0006086">
    <property type="term" value="P:pyruvate decarboxylation to acetyl-CoA"/>
    <property type="evidence" value="ECO:0000314"/>
    <property type="project" value="UniProtKB"/>
</dbReference>
<dbReference type="GO" id="GO:0006099">
    <property type="term" value="P:tricarboxylic acid cycle"/>
    <property type="evidence" value="ECO:0000304"/>
    <property type="project" value="ProtInc"/>
</dbReference>
<dbReference type="CDD" id="cd07036">
    <property type="entry name" value="TPP_PYR_E1-PDHc-beta_like"/>
    <property type="match status" value="1"/>
</dbReference>
<dbReference type="FunFam" id="3.40.50.920:FF:000001">
    <property type="entry name" value="Pyruvate dehydrogenase E1 beta subunit"/>
    <property type="match status" value="1"/>
</dbReference>
<dbReference type="FunFam" id="3.40.50.970:FF:000006">
    <property type="entry name" value="Pyruvate dehydrogenase E1 component subunit beta"/>
    <property type="match status" value="1"/>
</dbReference>
<dbReference type="Gene3D" id="3.40.50.920">
    <property type="match status" value="1"/>
</dbReference>
<dbReference type="Gene3D" id="3.40.50.970">
    <property type="match status" value="1"/>
</dbReference>
<dbReference type="InterPro" id="IPR027110">
    <property type="entry name" value="PDHB_mito-type"/>
</dbReference>
<dbReference type="InterPro" id="IPR029061">
    <property type="entry name" value="THDP-binding"/>
</dbReference>
<dbReference type="InterPro" id="IPR009014">
    <property type="entry name" value="Transketo_C/PFOR_II"/>
</dbReference>
<dbReference type="InterPro" id="IPR005475">
    <property type="entry name" value="Transketolase-like_Pyr-bd"/>
</dbReference>
<dbReference type="InterPro" id="IPR033248">
    <property type="entry name" value="Transketolase_C"/>
</dbReference>
<dbReference type="NCBIfam" id="NF006667">
    <property type="entry name" value="PRK09212.1"/>
    <property type="match status" value="1"/>
</dbReference>
<dbReference type="NCBIfam" id="NF008854">
    <property type="entry name" value="PRK11892.1"/>
    <property type="match status" value="1"/>
</dbReference>
<dbReference type="PANTHER" id="PTHR11624">
    <property type="entry name" value="DEHYDROGENASE RELATED"/>
    <property type="match status" value="1"/>
</dbReference>
<dbReference type="PANTHER" id="PTHR11624:SF96">
    <property type="entry name" value="PYRUVATE DEHYDROGENASE E1 COMPONENT SUBUNIT BETA, MITOCHONDRIAL"/>
    <property type="match status" value="1"/>
</dbReference>
<dbReference type="Pfam" id="PF02779">
    <property type="entry name" value="Transket_pyr"/>
    <property type="match status" value="1"/>
</dbReference>
<dbReference type="Pfam" id="PF02780">
    <property type="entry name" value="Transketolase_C"/>
    <property type="match status" value="1"/>
</dbReference>
<dbReference type="SMART" id="SM00861">
    <property type="entry name" value="Transket_pyr"/>
    <property type="match status" value="1"/>
</dbReference>
<dbReference type="SUPFAM" id="SSF52518">
    <property type="entry name" value="Thiamin diphosphate-binding fold (THDP-binding)"/>
    <property type="match status" value="1"/>
</dbReference>
<dbReference type="SUPFAM" id="SSF52922">
    <property type="entry name" value="TK C-terminal domain-like"/>
    <property type="match status" value="1"/>
</dbReference>
<feature type="transit peptide" description="Mitochondrion" evidence="8 12">
    <location>
        <begin position="1"/>
        <end position="30"/>
    </location>
</feature>
<feature type="chain" id="PRO_0000020457" description="Pyruvate dehydrogenase E1 component subunit beta, mitochondrial">
    <location>
        <begin position="31"/>
        <end position="359"/>
    </location>
</feature>
<feature type="binding site" evidence="2">
    <location>
        <position position="89"/>
    </location>
    <ligand>
        <name>thiamine diphosphate</name>
        <dbReference type="ChEBI" id="CHEBI:58937"/>
        <note>ligand shared with alpha subunit</note>
    </ligand>
</feature>
<feature type="binding site" evidence="2 5 16 17">
    <location>
        <position position="142"/>
    </location>
    <ligand>
        <name>K(+)</name>
        <dbReference type="ChEBI" id="CHEBI:29103"/>
        <note>structural</note>
    </ligand>
</feature>
<feature type="binding site" evidence="2 5 6 16 17 18 19 20 21 22">
    <location>
        <position position="190"/>
    </location>
    <ligand>
        <name>K(+)</name>
        <dbReference type="ChEBI" id="CHEBI:29103"/>
        <note>structural</note>
    </ligand>
</feature>
<feature type="binding site" evidence="6 18 19 20 21 22">
    <location>
        <position position="191"/>
    </location>
    <ligand>
        <name>K(+)</name>
        <dbReference type="ChEBI" id="CHEBI:29103"/>
        <note>structural</note>
    </ligand>
</feature>
<feature type="binding site" evidence="2 5 6 16 17 18 19 20 21 22">
    <location>
        <position position="193"/>
    </location>
    <ligand>
        <name>K(+)</name>
        <dbReference type="ChEBI" id="CHEBI:29103"/>
        <note>structural</note>
    </ligand>
</feature>
<feature type="binding site" evidence="2 5 6 16 17 18">
    <location>
        <position position="195"/>
    </location>
    <ligand>
        <name>K(+)</name>
        <dbReference type="ChEBI" id="CHEBI:29103"/>
        <note>structural</note>
    </ligand>
</feature>
<feature type="site" description="Important for interaction with DLAT" evidence="7">
    <location>
        <position position="319"/>
    </location>
</feature>
<feature type="modified residue" description="Phosphotyrosine" evidence="1">
    <location>
        <position position="67"/>
    </location>
</feature>
<feature type="modified residue" description="N6-acetyllysine" evidence="1">
    <location>
        <position position="354"/>
    </location>
</feature>
<feature type="splice variant" id="VSP_012675" description="In isoform 2." evidence="13">
    <location>
        <begin position="16"/>
        <end position="33"/>
    </location>
</feature>
<feature type="splice variant" id="VSP_043364" description="In isoform 3." evidence="14">
    <location>
        <begin position="135"/>
        <end position="152"/>
    </location>
</feature>
<feature type="sequence variant" id="VAR_004967" evidence="9 11">
    <original>L</original>
    <variation>V</variation>
    <location>
        <position position="31"/>
    </location>
</feature>
<feature type="sequence variant" id="VAR_030954" description="In PDHBD; dbSNP:rs28935769." evidence="4">
    <original>Y</original>
    <variation>C</variation>
    <location>
        <position position="132"/>
    </location>
</feature>
<feature type="sequence variant" id="VAR_021058" description="In PDHBD; dbSNP:rs28933391." evidence="4">
    <original>P</original>
    <variation>S</variation>
    <location>
        <position position="344"/>
    </location>
</feature>
<feature type="mutagenesis site" description="Does not affect interaction with DLAT." evidence="7">
    <original>E</original>
    <variation>A</variation>
    <variation>Q</variation>
    <location>
        <position position="259"/>
    </location>
</feature>
<feature type="mutagenesis site" description="Does not affect interaction with DLAT." evidence="7">
    <original>E</original>
    <variation>A</variation>
    <variation>Q</variation>
    <location>
        <position position="262"/>
    </location>
</feature>
<feature type="mutagenesis site" description="Does not affect interaction with DLAT." evidence="7">
    <original>E</original>
    <variation>A</variation>
    <variation>Q</variation>
    <location>
        <position position="264"/>
    </location>
</feature>
<feature type="mutagenesis site" description="Inhibits interaction with DLAT. Does not affect pyruvate decarboxylase activity. Loss of multienzyme pyruvate dehydrogenase complex activity." evidence="7">
    <original>D</original>
    <variation>A</variation>
    <location>
        <position position="319"/>
    </location>
</feature>
<feature type="mutagenesis site" description="Reduces interaction with DLAT. Reduces multienzyme pyruvate dehydrogenase complex activity. Does not affect pyruvate decarboxylase activity." evidence="7">
    <original>D</original>
    <variation>N</variation>
    <location>
        <position position="319"/>
    </location>
</feature>
<feature type="mutagenesis site" description="Reduces pyruvate decarboxylase and multienzyme pyruvate dehydrogenase complex activity. Does not affect interaction with DLAT." evidence="7">
    <original>I</original>
    <variation>A</variation>
    <location>
        <position position="359"/>
    </location>
</feature>
<feature type="mutagenesis site" description="Reduces pyruvate decarboxylase and multienzyme pyruvate dehydrogenase complex activity. Does not affect interaction with DLAT." evidence="7">
    <location>
        <position position="359"/>
    </location>
</feature>
<feature type="sequence conflict" description="In Ref. 5." evidence="15" ref="5">
    <original>RRPLR</original>
    <variation>AETPS</variation>
    <location>
        <begin position="9"/>
        <end position="13"/>
    </location>
</feature>
<feature type="sequence conflict" description="In Ref. 13; AA sequence." evidence="15" ref="13">
    <original>M</original>
    <variation>G</variation>
    <location>
        <position position="43"/>
    </location>
</feature>
<feature type="sequence conflict" description="In Ref. 5." evidence="15" ref="5">
    <original>Q</original>
    <variation>G</variation>
    <location>
        <position position="160"/>
    </location>
</feature>
<feature type="sequence conflict" description="In Ref. 5." evidence="15" ref="5">
    <original>PPEAQSKDF</original>
    <variation>LRKLSQKIL</variation>
    <location>
        <begin position="213"/>
        <end position="221"/>
    </location>
</feature>
<feature type="sequence conflict" description="In Ref. 4; AAA88097/BAA14123." evidence="15" ref="4">
    <original>P</original>
    <variation>L</variation>
    <location>
        <position position="213"/>
    </location>
</feature>
<feature type="sequence conflict" description="In Ref. 5." evidence="15" ref="5">
    <original>MEG</original>
    <variation>NGS</variation>
    <location>
        <begin position="310"/>
        <end position="312"/>
    </location>
</feature>
<feature type="strand" evidence="25">
    <location>
        <begin position="32"/>
        <end position="34"/>
    </location>
</feature>
<feature type="helix" evidence="25">
    <location>
        <begin position="35"/>
        <end position="49"/>
    </location>
</feature>
<feature type="strand" evidence="25">
    <location>
        <begin position="53"/>
        <end position="57"/>
    </location>
</feature>
<feature type="turn" evidence="27">
    <location>
        <begin position="58"/>
        <end position="61"/>
    </location>
</feature>
<feature type="turn" evidence="25">
    <location>
        <begin position="69"/>
        <end position="72"/>
    </location>
</feature>
<feature type="helix" evidence="25">
    <location>
        <begin position="73"/>
        <end position="77"/>
    </location>
</feature>
<feature type="turn" evidence="25">
    <location>
        <begin position="79"/>
        <end position="81"/>
    </location>
</feature>
<feature type="strand" evidence="25">
    <location>
        <begin position="82"/>
        <end position="84"/>
    </location>
</feature>
<feature type="helix" evidence="25">
    <location>
        <begin position="89"/>
        <end position="101"/>
    </location>
</feature>
<feature type="strand" evidence="25">
    <location>
        <begin position="105"/>
        <end position="109"/>
    </location>
</feature>
<feature type="helix" evidence="25">
    <location>
        <begin position="113"/>
        <end position="119"/>
    </location>
</feature>
<feature type="helix" evidence="25">
    <location>
        <begin position="120"/>
        <end position="124"/>
    </location>
</feature>
<feature type="turn" evidence="25">
    <location>
        <begin position="125"/>
        <end position="129"/>
    </location>
</feature>
<feature type="helix" evidence="25">
    <location>
        <begin position="130"/>
        <end position="133"/>
    </location>
</feature>
<feature type="turn" evidence="27">
    <location>
        <begin position="134"/>
        <end position="136"/>
    </location>
</feature>
<feature type="strand" evidence="25">
    <location>
        <begin position="143"/>
        <end position="147"/>
    </location>
</feature>
<feature type="helix" evidence="25">
    <location>
        <begin position="156"/>
        <end position="158"/>
    </location>
</feature>
<feature type="helix" evidence="25">
    <location>
        <begin position="163"/>
        <end position="167"/>
    </location>
</feature>
<feature type="strand" evidence="25">
    <location>
        <begin position="173"/>
        <end position="175"/>
    </location>
</feature>
<feature type="helix" evidence="25">
    <location>
        <begin position="180"/>
        <end position="192"/>
    </location>
</feature>
<feature type="strand" evidence="25">
    <location>
        <begin position="193"/>
        <end position="195"/>
    </location>
</feature>
<feature type="strand" evidence="25">
    <location>
        <begin position="197"/>
        <end position="201"/>
    </location>
</feature>
<feature type="turn" evidence="25">
    <location>
        <begin position="203"/>
        <end position="207"/>
    </location>
</feature>
<feature type="strand" evidence="25">
    <location>
        <begin position="209"/>
        <end position="211"/>
    </location>
</feature>
<feature type="helix" evidence="25">
    <location>
        <begin position="214"/>
        <end position="217"/>
    </location>
</feature>
<feature type="strand" evidence="25">
    <location>
        <begin position="229"/>
        <end position="232"/>
    </location>
</feature>
<feature type="strand" evidence="25">
    <location>
        <begin position="235"/>
        <end position="241"/>
    </location>
</feature>
<feature type="helix" evidence="25">
    <location>
        <begin position="245"/>
        <end position="257"/>
    </location>
</feature>
<feature type="turn" evidence="25">
    <location>
        <begin position="258"/>
        <end position="260"/>
    </location>
</feature>
<feature type="strand" evidence="25">
    <location>
        <begin position="263"/>
        <end position="267"/>
    </location>
</feature>
<feature type="strand" evidence="25">
    <location>
        <begin position="270"/>
        <end position="272"/>
    </location>
</feature>
<feature type="helix" evidence="25">
    <location>
        <begin position="276"/>
        <end position="286"/>
    </location>
</feature>
<feature type="strand" evidence="25">
    <location>
        <begin position="289"/>
        <end position="292"/>
    </location>
</feature>
<feature type="helix" evidence="25">
    <location>
        <begin position="301"/>
        <end position="311"/>
    </location>
</feature>
<feature type="helix" evidence="25">
    <location>
        <begin position="315"/>
        <end position="317"/>
    </location>
</feature>
<feature type="strand" evidence="25">
    <location>
        <begin position="323"/>
        <end position="325"/>
    </location>
</feature>
<feature type="strand" evidence="26">
    <location>
        <begin position="329"/>
        <end position="331"/>
    </location>
</feature>
<feature type="helix" evidence="25">
    <location>
        <begin position="336"/>
        <end position="340"/>
    </location>
</feature>
<feature type="helix" evidence="25">
    <location>
        <begin position="346"/>
        <end position="357"/>
    </location>
</feature>
<gene>
    <name type="primary">PDHB</name>
    <name type="synonym">PHE1B</name>
</gene>
<evidence type="ECO:0000250" key="1">
    <source>
        <dbReference type="UniProtKB" id="Q9D051"/>
    </source>
</evidence>
<evidence type="ECO:0000269" key="2">
    <source>
    </source>
</evidence>
<evidence type="ECO:0000269" key="3">
    <source>
    </source>
</evidence>
<evidence type="ECO:0000269" key="4">
    <source>
    </source>
</evidence>
<evidence type="ECO:0000269" key="5">
    <source>
    </source>
</evidence>
<evidence type="ECO:0000269" key="6">
    <source>
    </source>
</evidence>
<evidence type="ECO:0000269" key="7">
    <source>
    </source>
</evidence>
<evidence type="ECO:0000269" key="8">
    <source>
    </source>
</evidence>
<evidence type="ECO:0000269" key="9">
    <source>
    </source>
</evidence>
<evidence type="ECO:0000269" key="10">
    <source>
    </source>
</evidence>
<evidence type="ECO:0000269" key="11">
    <source>
    </source>
</evidence>
<evidence type="ECO:0000269" key="12">
    <source>
    </source>
</evidence>
<evidence type="ECO:0000303" key="13">
    <source>
    </source>
</evidence>
<evidence type="ECO:0000303" key="14">
    <source>
    </source>
</evidence>
<evidence type="ECO:0000305" key="15"/>
<evidence type="ECO:0007744" key="16">
    <source>
        <dbReference type="PDB" id="1NI4"/>
    </source>
</evidence>
<evidence type="ECO:0007744" key="17">
    <source>
        <dbReference type="PDB" id="2OZL"/>
    </source>
</evidence>
<evidence type="ECO:0007744" key="18">
    <source>
        <dbReference type="PDB" id="3EXE"/>
    </source>
</evidence>
<evidence type="ECO:0007744" key="19">
    <source>
        <dbReference type="PDB" id="3EXF"/>
    </source>
</evidence>
<evidence type="ECO:0007744" key="20">
    <source>
        <dbReference type="PDB" id="3EXG"/>
    </source>
</evidence>
<evidence type="ECO:0007744" key="21">
    <source>
        <dbReference type="PDB" id="3EXH"/>
    </source>
</evidence>
<evidence type="ECO:0007744" key="22">
    <source>
        <dbReference type="PDB" id="3EXI"/>
    </source>
</evidence>
<evidence type="ECO:0007744" key="23">
    <source>
        <dbReference type="PDB" id="6CER"/>
    </source>
</evidence>
<evidence type="ECO:0007744" key="24">
    <source>
        <dbReference type="PDB" id="6CFO"/>
    </source>
</evidence>
<evidence type="ECO:0007829" key="25">
    <source>
        <dbReference type="PDB" id="2OZL"/>
    </source>
</evidence>
<evidence type="ECO:0007829" key="26">
    <source>
        <dbReference type="PDB" id="3EXE"/>
    </source>
</evidence>
<evidence type="ECO:0007829" key="27">
    <source>
        <dbReference type="PDB" id="3EXI"/>
    </source>
</evidence>
<accession>P11177</accession>
<accession>B2R7L0</accession>
<accession>B4DDD7</accession>
<accession>Q6FH45</accession>
<accession>Q9BQ27</accession>
<accession>Q9UFK3</accession>
<reference key="1">
    <citation type="journal article" date="1990" name="Gene">
        <title>Cloning and cDNA sequence of the beta-subunit component of human pyruvate dehydrogenase complex.</title>
        <authorList>
            <person name="Ho L."/>
            <person name="Patel M.S."/>
        </authorList>
    </citation>
    <scope>NUCLEOTIDE SEQUENCE [MRNA] (ISOFORM 1)</scope>
</reference>
<reference key="2">
    <citation type="journal article" date="1990" name="Eur. J. Biochem.">
        <title>Isolation, characterization and chromosomal localization of cDNA clones for the E1 beta subunit of the pyruvate dehydrogenase complex.</title>
        <authorList>
            <person name="Chun K."/>
            <person name="MacKay N."/>
            <person name="Willard H.F."/>
            <person name="Robinson B.H."/>
        </authorList>
    </citation>
    <scope>NUCLEOTIDE SEQUENCE [MRNA] (ISOFORM 1)</scope>
</reference>
<reference key="3">
    <citation type="journal article" date="1990" name="J. Biol. Chem.">
        <title>Characterization of two cDNA clones for pyruvate dehydrogenase E1 beta subunit and its regulation in tricarboxylic acid cycle-deficient fibroblast.</title>
        <authorList>
            <person name="Huh T.L."/>
            <person name="Casazza J.P."/>
            <person name="Huh J.W."/>
            <person name="Chi Y.T."/>
            <person name="Song B.J."/>
        </authorList>
    </citation>
    <scope>NUCLEOTIDE SEQUENCE [MRNA] (ISOFORM 1)</scope>
    <scope>VARIANT VAL-31</scope>
</reference>
<reference key="4">
    <citation type="journal article" date="1990" name="Proc. Natl. Acad. Sci. U.S.A.">
        <title>Molecular cloning and characterization of human pyruvate dehydrogenase beta subunit gene.</title>
        <authorList>
            <person name="Koike K."/>
            <person name="Urata Y."/>
            <person name="Koike M."/>
        </authorList>
    </citation>
    <scope>NUCLEOTIDE SEQUENCE [GENOMIC DNA / MRNA] (ISOFORM 1)</scope>
</reference>
<reference key="5">
    <citation type="journal article" date="1988" name="Proc. Natl. Acad. Sci. U.S.A.">
        <title>Cloning and sequencing of cDNAs encoding alpha and beta subunits of human pyruvate dehydrogenase.</title>
        <authorList>
            <person name="Koike K."/>
            <person name="Ohta S."/>
            <person name="Urata Y."/>
            <person name="Kagawa Y."/>
            <person name="Koike M."/>
        </authorList>
    </citation>
    <scope>NUCLEOTIDE SEQUENCE [MRNA]</scope>
    <scope>VARIANT VAL-31</scope>
</reference>
<reference key="6">
    <citation type="journal article" date="2001" name="Genome Res.">
        <title>Towards a catalog of human genes and proteins: sequencing and analysis of 500 novel complete protein coding human cDNAs.</title>
        <authorList>
            <person name="Wiemann S."/>
            <person name="Weil B."/>
            <person name="Wellenreuther R."/>
            <person name="Gassenhuber J."/>
            <person name="Glassl S."/>
            <person name="Ansorge W."/>
            <person name="Boecher M."/>
            <person name="Bloecker H."/>
            <person name="Bauersachs S."/>
            <person name="Blum H."/>
            <person name="Lauber J."/>
            <person name="Duesterhoeft A."/>
            <person name="Beyer A."/>
            <person name="Koehrer K."/>
            <person name="Strack N."/>
            <person name="Mewes H.-W."/>
            <person name="Ottenwaelder B."/>
            <person name="Obermaier B."/>
            <person name="Tampe J."/>
            <person name="Heubner D."/>
            <person name="Wambutt R."/>
            <person name="Korn B."/>
            <person name="Klein M."/>
            <person name="Poustka A."/>
        </authorList>
    </citation>
    <scope>NUCLEOTIDE SEQUENCE [LARGE SCALE MRNA] (ISOFORM 2)</scope>
    <source>
        <tissue>Brain</tissue>
    </source>
</reference>
<reference key="7">
    <citation type="submission" date="2004-06" db="EMBL/GenBank/DDBJ databases">
        <title>Cloning of human full open reading frames in Gateway(TM) system entry vector (pDONR201).</title>
        <authorList>
            <person name="Halleck A."/>
            <person name="Ebert L."/>
            <person name="Mkoundinya M."/>
            <person name="Schick M."/>
            <person name="Eisenstein S."/>
            <person name="Neubert P."/>
            <person name="Kstrang K."/>
            <person name="Schatten R."/>
            <person name="Shen B."/>
            <person name="Henze S."/>
            <person name="Mar W."/>
            <person name="Korn B."/>
            <person name="Zuo D."/>
            <person name="Hu Y."/>
            <person name="LaBaer J."/>
        </authorList>
    </citation>
    <scope>NUCLEOTIDE SEQUENCE [LARGE SCALE MRNA] (ISOFORM 1)</scope>
</reference>
<reference key="8">
    <citation type="journal article" date="2004" name="Nat. Genet.">
        <title>Complete sequencing and characterization of 21,243 full-length human cDNAs.</title>
        <authorList>
            <person name="Ota T."/>
            <person name="Suzuki Y."/>
            <person name="Nishikawa T."/>
            <person name="Otsuki T."/>
            <person name="Sugiyama T."/>
            <person name="Irie R."/>
            <person name="Wakamatsu A."/>
            <person name="Hayashi K."/>
            <person name="Sato H."/>
            <person name="Nagai K."/>
            <person name="Kimura K."/>
            <person name="Makita H."/>
            <person name="Sekine M."/>
            <person name="Obayashi M."/>
            <person name="Nishi T."/>
            <person name="Shibahara T."/>
            <person name="Tanaka T."/>
            <person name="Ishii S."/>
            <person name="Yamamoto J."/>
            <person name="Saito K."/>
            <person name="Kawai Y."/>
            <person name="Isono Y."/>
            <person name="Nakamura Y."/>
            <person name="Nagahari K."/>
            <person name="Murakami K."/>
            <person name="Yasuda T."/>
            <person name="Iwayanagi T."/>
            <person name="Wagatsuma M."/>
            <person name="Shiratori A."/>
            <person name="Sudo H."/>
            <person name="Hosoiri T."/>
            <person name="Kaku Y."/>
            <person name="Kodaira H."/>
            <person name="Kondo H."/>
            <person name="Sugawara M."/>
            <person name="Takahashi M."/>
            <person name="Kanda K."/>
            <person name="Yokoi T."/>
            <person name="Furuya T."/>
            <person name="Kikkawa E."/>
            <person name="Omura Y."/>
            <person name="Abe K."/>
            <person name="Kamihara K."/>
            <person name="Katsuta N."/>
            <person name="Sato K."/>
            <person name="Tanikawa M."/>
            <person name="Yamazaki M."/>
            <person name="Ninomiya K."/>
            <person name="Ishibashi T."/>
            <person name="Yamashita H."/>
            <person name="Murakawa K."/>
            <person name="Fujimori K."/>
            <person name="Tanai H."/>
            <person name="Kimata M."/>
            <person name="Watanabe M."/>
            <person name="Hiraoka S."/>
            <person name="Chiba Y."/>
            <person name="Ishida S."/>
            <person name="Ono Y."/>
            <person name="Takiguchi S."/>
            <person name="Watanabe S."/>
            <person name="Yosida M."/>
            <person name="Hotuta T."/>
            <person name="Kusano J."/>
            <person name="Kanehori K."/>
            <person name="Takahashi-Fujii A."/>
            <person name="Hara H."/>
            <person name="Tanase T.-O."/>
            <person name="Nomura Y."/>
            <person name="Togiya S."/>
            <person name="Komai F."/>
            <person name="Hara R."/>
            <person name="Takeuchi K."/>
            <person name="Arita M."/>
            <person name="Imose N."/>
            <person name="Musashino K."/>
            <person name="Yuuki H."/>
            <person name="Oshima A."/>
            <person name="Sasaki N."/>
            <person name="Aotsuka S."/>
            <person name="Yoshikawa Y."/>
            <person name="Matsunawa H."/>
            <person name="Ichihara T."/>
            <person name="Shiohata N."/>
            <person name="Sano S."/>
            <person name="Moriya S."/>
            <person name="Momiyama H."/>
            <person name="Satoh N."/>
            <person name="Takami S."/>
            <person name="Terashima Y."/>
            <person name="Suzuki O."/>
            <person name="Nakagawa S."/>
            <person name="Senoh A."/>
            <person name="Mizoguchi H."/>
            <person name="Goto Y."/>
            <person name="Shimizu F."/>
            <person name="Wakebe H."/>
            <person name="Hishigaki H."/>
            <person name="Watanabe T."/>
            <person name="Sugiyama A."/>
            <person name="Takemoto M."/>
            <person name="Kawakami B."/>
            <person name="Yamazaki M."/>
            <person name="Watanabe K."/>
            <person name="Kumagai A."/>
            <person name="Itakura S."/>
            <person name="Fukuzumi Y."/>
            <person name="Fujimori Y."/>
            <person name="Komiyama M."/>
            <person name="Tashiro H."/>
            <person name="Tanigami A."/>
            <person name="Fujiwara T."/>
            <person name="Ono T."/>
            <person name="Yamada K."/>
            <person name="Fujii Y."/>
            <person name="Ozaki K."/>
            <person name="Hirao M."/>
            <person name="Ohmori Y."/>
            <person name="Kawabata A."/>
            <person name="Hikiji T."/>
            <person name="Kobatake N."/>
            <person name="Inagaki H."/>
            <person name="Ikema Y."/>
            <person name="Okamoto S."/>
            <person name="Okitani R."/>
            <person name="Kawakami T."/>
            <person name="Noguchi S."/>
            <person name="Itoh T."/>
            <person name="Shigeta K."/>
            <person name="Senba T."/>
            <person name="Matsumura K."/>
            <person name="Nakajima Y."/>
            <person name="Mizuno T."/>
            <person name="Morinaga M."/>
            <person name="Sasaki M."/>
            <person name="Togashi T."/>
            <person name="Oyama M."/>
            <person name="Hata H."/>
            <person name="Watanabe M."/>
            <person name="Komatsu T."/>
            <person name="Mizushima-Sugano J."/>
            <person name="Satoh T."/>
            <person name="Shirai Y."/>
            <person name="Takahashi Y."/>
            <person name="Nakagawa K."/>
            <person name="Okumura K."/>
            <person name="Nagase T."/>
            <person name="Nomura N."/>
            <person name="Kikuchi H."/>
            <person name="Masuho Y."/>
            <person name="Yamashita R."/>
            <person name="Nakai K."/>
            <person name="Yada T."/>
            <person name="Nakamura Y."/>
            <person name="Ohara O."/>
            <person name="Isogai T."/>
            <person name="Sugano S."/>
        </authorList>
    </citation>
    <scope>NUCLEOTIDE SEQUENCE [LARGE SCALE MRNA] (ISOFORMS 1 AND 3)</scope>
    <source>
        <tissue>Brain cortex</tissue>
    </source>
</reference>
<reference key="9">
    <citation type="journal article" date="2006" name="Nature">
        <title>The DNA sequence, annotation and analysis of human chromosome 3.</title>
        <authorList>
            <person name="Muzny D.M."/>
            <person name="Scherer S.E."/>
            <person name="Kaul R."/>
            <person name="Wang J."/>
            <person name="Yu J."/>
            <person name="Sudbrak R."/>
            <person name="Buhay C.J."/>
            <person name="Chen R."/>
            <person name="Cree A."/>
            <person name="Ding Y."/>
            <person name="Dugan-Rocha S."/>
            <person name="Gill R."/>
            <person name="Gunaratne P."/>
            <person name="Harris R.A."/>
            <person name="Hawes A.C."/>
            <person name="Hernandez J."/>
            <person name="Hodgson A.V."/>
            <person name="Hume J."/>
            <person name="Jackson A."/>
            <person name="Khan Z.M."/>
            <person name="Kovar-Smith C."/>
            <person name="Lewis L.R."/>
            <person name="Lozado R.J."/>
            <person name="Metzker M.L."/>
            <person name="Milosavljevic A."/>
            <person name="Miner G.R."/>
            <person name="Morgan M.B."/>
            <person name="Nazareth L.V."/>
            <person name="Scott G."/>
            <person name="Sodergren E."/>
            <person name="Song X.-Z."/>
            <person name="Steffen D."/>
            <person name="Wei S."/>
            <person name="Wheeler D.A."/>
            <person name="Wright M.W."/>
            <person name="Worley K.C."/>
            <person name="Yuan Y."/>
            <person name="Zhang Z."/>
            <person name="Adams C.Q."/>
            <person name="Ansari-Lari M.A."/>
            <person name="Ayele M."/>
            <person name="Brown M.J."/>
            <person name="Chen G."/>
            <person name="Chen Z."/>
            <person name="Clendenning J."/>
            <person name="Clerc-Blankenburg K.P."/>
            <person name="Chen R."/>
            <person name="Chen Z."/>
            <person name="Davis C."/>
            <person name="Delgado O."/>
            <person name="Dinh H.H."/>
            <person name="Dong W."/>
            <person name="Draper H."/>
            <person name="Ernst S."/>
            <person name="Fu G."/>
            <person name="Gonzalez-Garay M.L."/>
            <person name="Garcia D.K."/>
            <person name="Gillett W."/>
            <person name="Gu J."/>
            <person name="Hao B."/>
            <person name="Haugen E."/>
            <person name="Havlak P."/>
            <person name="He X."/>
            <person name="Hennig S."/>
            <person name="Hu S."/>
            <person name="Huang W."/>
            <person name="Jackson L.R."/>
            <person name="Jacob L.S."/>
            <person name="Kelly S.H."/>
            <person name="Kube M."/>
            <person name="Levy R."/>
            <person name="Li Z."/>
            <person name="Liu B."/>
            <person name="Liu J."/>
            <person name="Liu W."/>
            <person name="Lu J."/>
            <person name="Maheshwari M."/>
            <person name="Nguyen B.-V."/>
            <person name="Okwuonu G.O."/>
            <person name="Palmeiri A."/>
            <person name="Pasternak S."/>
            <person name="Perez L.M."/>
            <person name="Phelps K.A."/>
            <person name="Plopper F.J."/>
            <person name="Qiang B."/>
            <person name="Raymond C."/>
            <person name="Rodriguez R."/>
            <person name="Saenphimmachak C."/>
            <person name="Santibanez J."/>
            <person name="Shen H."/>
            <person name="Shen Y."/>
            <person name="Subramanian S."/>
            <person name="Tabor P.E."/>
            <person name="Verduzco D."/>
            <person name="Waldron L."/>
            <person name="Wang J."/>
            <person name="Wang J."/>
            <person name="Wang Q."/>
            <person name="Williams G.A."/>
            <person name="Wong G.K.-S."/>
            <person name="Yao Z."/>
            <person name="Zhang J."/>
            <person name="Zhang X."/>
            <person name="Zhao G."/>
            <person name="Zhou J."/>
            <person name="Zhou Y."/>
            <person name="Nelson D."/>
            <person name="Lehrach H."/>
            <person name="Reinhardt R."/>
            <person name="Naylor S.L."/>
            <person name="Yang H."/>
            <person name="Olson M."/>
            <person name="Weinstock G."/>
            <person name="Gibbs R.A."/>
        </authorList>
    </citation>
    <scope>NUCLEOTIDE SEQUENCE [LARGE SCALE GENOMIC DNA]</scope>
</reference>
<reference key="10">
    <citation type="submission" date="2005-07" db="EMBL/GenBank/DDBJ databases">
        <authorList>
            <person name="Mural R.J."/>
            <person name="Istrail S."/>
            <person name="Sutton G.G."/>
            <person name="Florea L."/>
            <person name="Halpern A.L."/>
            <person name="Mobarry C.M."/>
            <person name="Lippert R."/>
            <person name="Walenz B."/>
            <person name="Shatkay H."/>
            <person name="Dew I."/>
            <person name="Miller J.R."/>
            <person name="Flanigan M.J."/>
            <person name="Edwards N.J."/>
            <person name="Bolanos R."/>
            <person name="Fasulo D."/>
            <person name="Halldorsson B.V."/>
            <person name="Hannenhalli S."/>
            <person name="Turner R."/>
            <person name="Yooseph S."/>
            <person name="Lu F."/>
            <person name="Nusskern D.R."/>
            <person name="Shue B.C."/>
            <person name="Zheng X.H."/>
            <person name="Zhong F."/>
            <person name="Delcher A.L."/>
            <person name="Huson D.H."/>
            <person name="Kravitz S.A."/>
            <person name="Mouchard L."/>
            <person name="Reinert K."/>
            <person name="Remington K.A."/>
            <person name="Clark A.G."/>
            <person name="Waterman M.S."/>
            <person name="Eichler E.E."/>
            <person name="Adams M.D."/>
            <person name="Hunkapiller M.W."/>
            <person name="Myers E.W."/>
            <person name="Venter J.C."/>
        </authorList>
    </citation>
    <scope>NUCLEOTIDE SEQUENCE [LARGE SCALE GENOMIC DNA]</scope>
</reference>
<reference key="11">
    <citation type="journal article" date="2004" name="Genome Res.">
        <title>The status, quality, and expansion of the NIH full-length cDNA project: the Mammalian Gene Collection (MGC).</title>
        <authorList>
            <consortium name="The MGC Project Team"/>
        </authorList>
    </citation>
    <scope>NUCLEOTIDE SEQUENCE [LARGE SCALE MRNA] (ISOFORM 1)</scope>
    <source>
        <tissue>Lung</tissue>
    </source>
</reference>
<reference key="12">
    <citation type="journal article" date="1988" name="Biochem. Biophys. Res. Commun.">
        <title>Identification of a cDNA clone for the beta-subunit of the pyruvate dehydrogenase component of human pyruvate dehydrogenase complex.</title>
        <authorList>
            <person name="Ho L."/>
            <person name="Javed A.A."/>
            <person name="Pepin R.A."/>
            <person name="Thekkumkara T.J."/>
            <person name="Raefsky C."/>
            <person name="Mole J.E."/>
            <person name="Caliendo A.M."/>
            <person name="Kwon M.S."/>
            <person name="Kerr D.S."/>
            <person name="Patel M.S."/>
        </authorList>
    </citation>
    <scope>PRELIMINARY NUCLEOTIDE SEQUENCE [MRNA] OF 23-69</scope>
</reference>
<reference key="13">
    <citation type="journal article" date="1994" name="Electrophoresis">
        <title>The human myocardial two-dimensional gel protein database: update 1994.</title>
        <authorList>
            <person name="Corbett J.M."/>
            <person name="Wheeler C.H."/>
            <person name="Baker C.S."/>
            <person name="Yacoub M.H."/>
            <person name="Dunn M.J."/>
        </authorList>
    </citation>
    <scope>PROTEIN SEQUENCE OF 31-43</scope>
    <source>
        <tissue>Heart</tissue>
    </source>
</reference>
<reference key="14">
    <citation type="journal article" date="1990" name="Hepatology">
        <title>Isolation of tryptic fragment of antigen from mitochondrial inner membrane proteins reacting with antimitochondrial antibody in sera of patients with primary biliary cirrhosis.</title>
        <authorList>
            <person name="Muno D."/>
            <person name="Kominami E."/>
            <person name="Ishii H."/>
            <person name="Usui K."/>
            <person name="Saifuku K."/>
            <person name="Sakakibara Y."/>
            <person name="Namihisa T."/>
        </authorList>
    </citation>
    <scope>PROTEIN SEQUENCE OF 31-55</scope>
</reference>
<reference key="15">
    <citation type="journal article" date="2004" name="J. Biol. Chem.">
        <title>Organization of the cores of the mammalian pyruvate dehydrogenase complex formed by E2 and E2 plus the E3-binding protein and their capacities to bind the E1 and E3 components.</title>
        <authorList>
            <person name="Hiromasa Y."/>
            <person name="Fujisawa T."/>
            <person name="Aso Y."/>
            <person name="Roche T.E."/>
        </authorList>
    </citation>
    <scope>SUBUNIT</scope>
</reference>
<reference key="16">
    <citation type="journal article" date="2009" name="J. Mol. Catal., B Enzym.">
        <title>Interaction of E1 and E3 components with the core proteins of the human pyruvate dehydrogenase complex.</title>
        <authorList>
            <person name="Patel M.S."/>
            <person name="Korotchkina L.G."/>
            <person name="Sidhu S."/>
        </authorList>
    </citation>
    <scope>INTERACTION WITH DLAT</scope>
    <scope>MUTAGENESIS OF GLU-259; GLU-262; GLU-264; ASP-319 AND ILE-359</scope>
</reference>
<reference key="17">
    <citation type="journal article" date="2011" name="BMC Syst. Biol.">
        <title>Initial characterization of the human central proteome.</title>
        <authorList>
            <person name="Burkard T.R."/>
            <person name="Planyavsky M."/>
            <person name="Kaupe I."/>
            <person name="Breitwieser F.P."/>
            <person name="Buerckstuemmer T."/>
            <person name="Bennett K.L."/>
            <person name="Superti-Furga G."/>
            <person name="Colinge J."/>
        </authorList>
    </citation>
    <scope>IDENTIFICATION BY MASS SPECTROMETRY [LARGE SCALE ANALYSIS]</scope>
</reference>
<reference key="18">
    <citation type="journal article" date="2014" name="J. Proteomics">
        <title>An enzyme assisted RP-RPLC approach for in-depth analysis of human liver phosphoproteome.</title>
        <authorList>
            <person name="Bian Y."/>
            <person name="Song C."/>
            <person name="Cheng K."/>
            <person name="Dong M."/>
            <person name="Wang F."/>
            <person name="Huang J."/>
            <person name="Sun D."/>
            <person name="Wang L."/>
            <person name="Ye M."/>
            <person name="Zou H."/>
        </authorList>
    </citation>
    <scope>IDENTIFICATION BY MASS SPECTROMETRY [LARGE SCALE ANALYSIS]</scope>
    <source>
        <tissue>Liver</tissue>
    </source>
</reference>
<reference key="19">
    <citation type="journal article" date="2015" name="Proteomics">
        <title>N-terminome analysis of the human mitochondrial proteome.</title>
        <authorList>
            <person name="Vaca Jacome A.S."/>
            <person name="Rabilloud T."/>
            <person name="Schaeffer-Reiss C."/>
            <person name="Rompais M."/>
            <person name="Ayoub D."/>
            <person name="Lane L."/>
            <person name="Bairoch A."/>
            <person name="Van Dorsselaer A."/>
            <person name="Carapito C."/>
        </authorList>
    </citation>
    <scope>IDENTIFICATION BY MASS SPECTROMETRY [LARGE SCALE ANALYSIS]</scope>
</reference>
<reference evidence="16" key="20">
    <citation type="journal article" date="2003" name="J. Biol. Chem.">
        <title>Structural basis for flip-flop action of thiamin pyrophosphate-dependent enzymes revealed by human pyruvate dehydrogenase.</title>
        <authorList>
            <person name="Ciszak E.M."/>
            <person name="Korotchkina L.G."/>
            <person name="Dominiak P.M."/>
            <person name="Sidhu S."/>
            <person name="Patel M.S."/>
        </authorList>
    </citation>
    <scope>X-RAY CRYSTALLOGRAPHY (1.95 ANGSTROMS) OF 32-359 IN COMPLEX WITH THIAMINE PYROPHOSPHATE AND K(+)</scope>
    <scope>COFACTOR</scope>
    <scope>SUBUNIT</scope>
</reference>
<reference evidence="17" key="21">
    <citation type="journal article" date="2007" name="Biochemistry">
        <title>Phosphorylation of serine 264 impedes active site accessibility in the E1 component of the human pyruvate dehydrogenase multienzyme complex.</title>
        <authorList>
            <person name="Seifert F."/>
            <person name="Ciszak E."/>
            <person name="Korotchkina L."/>
            <person name="Golbik R."/>
            <person name="Spinka M."/>
            <person name="Dominiak P."/>
            <person name="Sidhu S."/>
            <person name="Brauer J."/>
            <person name="Patel M.S."/>
            <person name="Tittmann K."/>
        </authorList>
    </citation>
    <scope>X-RAY CRYSTALLOGRAPHY (1.90 ANGSTROMS) OF 32-359 IN COMPLEX WITH K(+)</scope>
    <scope>SUBUNIT</scope>
    <scope>FUNCTION</scope>
</reference>
<reference evidence="18 19 20 21 22" key="22">
    <citation type="journal article" date="2008" name="Structure">
        <title>Structural basis for inactivation of the human pyruvate dehydrogenase complex by phosphorylation: role of disordered phosphorylation loops.</title>
        <authorList>
            <person name="Kato M."/>
            <person name="Wynn R.M."/>
            <person name="Chuang J.L."/>
            <person name="Tso S.C."/>
            <person name="Machius M."/>
            <person name="Li J."/>
            <person name="Chuang D.T."/>
        </authorList>
    </citation>
    <scope>X-RAY CRYSTALLOGRAPHY (1.98 ANGSTROMS) OF 31-359 IN COMPLEX WITH K(+)</scope>
    <scope>CATALYTIC ACTIVITY</scope>
    <scope>SUBUNIT</scope>
    <scope>COFACTOR</scope>
    <scope>FUNCTION</scope>
</reference>
<reference evidence="23 24" key="23">
    <citation type="journal article" date="2018" name="J. Biol. Chem.">
        <title>Pyruvate dehydrogenase complex deficiency is linked to regulatory loop disorder in the alphaV138M variant of human pyruvate dehydrogenase.</title>
        <authorList>
            <person name="Whitley M.J."/>
            <person name="Arjunan P."/>
            <person name="Nemeria N.S."/>
            <person name="Korotchkina L.G."/>
            <person name="Park Y.H."/>
            <person name="Patel M.S."/>
            <person name="Jordan F."/>
            <person name="Furey W."/>
        </authorList>
    </citation>
    <scope>X-RAY CRYSTALLOGRAPHY (2.69 ANGSTROMS) OF 31-359</scope>
    <scope>SUBUNIT</scope>
</reference>
<reference key="24">
    <citation type="journal article" date="2004" name="Hum. Genet.">
        <title>Mutations in the gene for the E1beta subunit: a novel cause of pyruvate dehydrogenase deficiency.</title>
        <authorList>
            <person name="Brown R.M."/>
            <person name="Head R.A."/>
            <person name="Boubriak I.I."/>
            <person name="Leonard J.V."/>
            <person name="Thomas N.H."/>
            <person name="Brown G.K."/>
        </authorList>
    </citation>
    <scope>VARIANTS PDHBD CYS-132 AND SER-344</scope>
</reference>
<organism>
    <name type="scientific">Homo sapiens</name>
    <name type="common">Human</name>
    <dbReference type="NCBI Taxonomy" id="9606"/>
    <lineage>
        <taxon>Eukaryota</taxon>
        <taxon>Metazoa</taxon>
        <taxon>Chordata</taxon>
        <taxon>Craniata</taxon>
        <taxon>Vertebrata</taxon>
        <taxon>Euteleostomi</taxon>
        <taxon>Mammalia</taxon>
        <taxon>Eutheria</taxon>
        <taxon>Euarchontoglires</taxon>
        <taxon>Primates</taxon>
        <taxon>Haplorrhini</taxon>
        <taxon>Catarrhini</taxon>
        <taxon>Hominidae</taxon>
        <taxon>Homo</taxon>
    </lineage>
</organism>
<name>ODPB_HUMAN</name>
<sequence length="359" mass="39233">MAAVSGLVRRPLREVSGLLKRRFHWTAPAALQVTVRDAINQGMDEELERDEKVFLLGEEVAQYDGAYKVSRGLWKKYGDKRIIDTPISEMGFAGIAVGAAMAGLRPICEFMTFNFSMQAIDQVINSAAKTYYMSGGLQPVPIVFRGPNGASAGVAAQHSQCFAAWYGHCPGLKVVSPWNSEDAKGLIKSAIRDNNPVVVLENELMYGVPFEFPPEAQSKDFLIPIGKAKIERQGTHITVVSHSRPVGHCLEAAAVLSKEGVECEVINMRTIRPMDMETIEASVMKTNHLVTVEGGWPQFGVGAEICARIMEGPAFNFLDAPAVRVTGADVPMPYAKILEDNSIPQVKDIIFAIKKTLNI</sequence>
<keyword id="KW-0002">3D-structure</keyword>
<keyword id="KW-0007">Acetylation</keyword>
<keyword id="KW-0025">Alternative splicing</keyword>
<keyword id="KW-0119">Carbohydrate metabolism</keyword>
<keyword id="KW-0903">Direct protein sequencing</keyword>
<keyword id="KW-0225">Disease variant</keyword>
<keyword id="KW-0313">Glucose metabolism</keyword>
<keyword id="KW-0479">Metal-binding</keyword>
<keyword id="KW-0496">Mitochondrion</keyword>
<keyword id="KW-0560">Oxidoreductase</keyword>
<keyword id="KW-0597">Phosphoprotein</keyword>
<keyword id="KW-0630">Potassium</keyword>
<keyword id="KW-1267">Proteomics identification</keyword>
<keyword id="KW-0670">Pyruvate</keyword>
<keyword id="KW-1185">Reference proteome</keyword>
<keyword id="KW-0786">Thiamine pyrophosphate</keyword>
<keyword id="KW-0809">Transit peptide</keyword>
<keyword id="KW-0816">Tricarboxylic acid cycle</keyword>